<comment type="function">
    <text evidence="1">Phosphorylation of dTMP to form dTDP in both de novo and salvage pathways of dTTP synthesis.</text>
</comment>
<comment type="catalytic activity">
    <reaction evidence="1">
        <text>dTMP + ATP = dTDP + ADP</text>
        <dbReference type="Rhea" id="RHEA:13517"/>
        <dbReference type="ChEBI" id="CHEBI:30616"/>
        <dbReference type="ChEBI" id="CHEBI:58369"/>
        <dbReference type="ChEBI" id="CHEBI:63528"/>
        <dbReference type="ChEBI" id="CHEBI:456216"/>
        <dbReference type="EC" id="2.7.4.9"/>
    </reaction>
</comment>
<comment type="similarity">
    <text evidence="1">Belongs to the thymidylate kinase family.</text>
</comment>
<feature type="chain" id="PRO_1000097391" description="Thymidylate kinase">
    <location>
        <begin position="1"/>
        <end position="213"/>
    </location>
</feature>
<feature type="binding site" evidence="1">
    <location>
        <begin position="10"/>
        <end position="17"/>
    </location>
    <ligand>
        <name>ATP</name>
        <dbReference type="ChEBI" id="CHEBI:30616"/>
    </ligand>
</feature>
<name>KTHY_ECODH</name>
<proteinExistence type="inferred from homology"/>
<dbReference type="EC" id="2.7.4.9" evidence="1"/>
<dbReference type="EMBL" id="CP000948">
    <property type="protein sequence ID" value="ACB02291.1"/>
    <property type="molecule type" value="Genomic_DNA"/>
</dbReference>
<dbReference type="RefSeq" id="WP_001257000.1">
    <property type="nucleotide sequence ID" value="NC_010473.1"/>
</dbReference>
<dbReference type="SMR" id="B1XA08"/>
<dbReference type="GeneID" id="93776310"/>
<dbReference type="KEGG" id="ecd:ECDH10B_1170"/>
<dbReference type="HOGENOM" id="CLU_049131_0_1_6"/>
<dbReference type="GO" id="GO:0005829">
    <property type="term" value="C:cytosol"/>
    <property type="evidence" value="ECO:0007669"/>
    <property type="project" value="TreeGrafter"/>
</dbReference>
<dbReference type="GO" id="GO:0005524">
    <property type="term" value="F:ATP binding"/>
    <property type="evidence" value="ECO:0007669"/>
    <property type="project" value="UniProtKB-UniRule"/>
</dbReference>
<dbReference type="GO" id="GO:0004798">
    <property type="term" value="F:dTMP kinase activity"/>
    <property type="evidence" value="ECO:0007669"/>
    <property type="project" value="UniProtKB-UniRule"/>
</dbReference>
<dbReference type="GO" id="GO:0006233">
    <property type="term" value="P:dTDP biosynthetic process"/>
    <property type="evidence" value="ECO:0007669"/>
    <property type="project" value="InterPro"/>
</dbReference>
<dbReference type="GO" id="GO:0006235">
    <property type="term" value="P:dTTP biosynthetic process"/>
    <property type="evidence" value="ECO:0007669"/>
    <property type="project" value="UniProtKB-UniRule"/>
</dbReference>
<dbReference type="GO" id="GO:0006227">
    <property type="term" value="P:dUDP biosynthetic process"/>
    <property type="evidence" value="ECO:0007669"/>
    <property type="project" value="TreeGrafter"/>
</dbReference>
<dbReference type="CDD" id="cd01672">
    <property type="entry name" value="TMPK"/>
    <property type="match status" value="1"/>
</dbReference>
<dbReference type="FunFam" id="3.40.50.300:FF:000321">
    <property type="entry name" value="Thymidylate kinase"/>
    <property type="match status" value="1"/>
</dbReference>
<dbReference type="Gene3D" id="3.40.50.300">
    <property type="entry name" value="P-loop containing nucleotide triphosphate hydrolases"/>
    <property type="match status" value="1"/>
</dbReference>
<dbReference type="HAMAP" id="MF_00165">
    <property type="entry name" value="Thymidylate_kinase"/>
    <property type="match status" value="1"/>
</dbReference>
<dbReference type="InterPro" id="IPR027417">
    <property type="entry name" value="P-loop_NTPase"/>
</dbReference>
<dbReference type="InterPro" id="IPR039430">
    <property type="entry name" value="Thymidylate_kin-like_dom"/>
</dbReference>
<dbReference type="InterPro" id="IPR018095">
    <property type="entry name" value="Thymidylate_kin_CS"/>
</dbReference>
<dbReference type="InterPro" id="IPR018094">
    <property type="entry name" value="Thymidylate_kinase"/>
</dbReference>
<dbReference type="NCBIfam" id="TIGR00041">
    <property type="entry name" value="DTMP_kinase"/>
    <property type="match status" value="1"/>
</dbReference>
<dbReference type="PANTHER" id="PTHR10344">
    <property type="entry name" value="THYMIDYLATE KINASE"/>
    <property type="match status" value="1"/>
</dbReference>
<dbReference type="PANTHER" id="PTHR10344:SF4">
    <property type="entry name" value="UMP-CMP KINASE 2, MITOCHONDRIAL"/>
    <property type="match status" value="1"/>
</dbReference>
<dbReference type="Pfam" id="PF02223">
    <property type="entry name" value="Thymidylate_kin"/>
    <property type="match status" value="1"/>
</dbReference>
<dbReference type="SUPFAM" id="SSF52540">
    <property type="entry name" value="P-loop containing nucleoside triphosphate hydrolases"/>
    <property type="match status" value="1"/>
</dbReference>
<dbReference type="PROSITE" id="PS01331">
    <property type="entry name" value="THYMIDYLATE_KINASE"/>
    <property type="match status" value="1"/>
</dbReference>
<organism>
    <name type="scientific">Escherichia coli (strain K12 / DH10B)</name>
    <dbReference type="NCBI Taxonomy" id="316385"/>
    <lineage>
        <taxon>Bacteria</taxon>
        <taxon>Pseudomonadati</taxon>
        <taxon>Pseudomonadota</taxon>
        <taxon>Gammaproteobacteria</taxon>
        <taxon>Enterobacterales</taxon>
        <taxon>Enterobacteriaceae</taxon>
        <taxon>Escherichia</taxon>
    </lineage>
</organism>
<reference key="1">
    <citation type="journal article" date="2008" name="J. Bacteriol.">
        <title>The complete genome sequence of Escherichia coli DH10B: insights into the biology of a laboratory workhorse.</title>
        <authorList>
            <person name="Durfee T."/>
            <person name="Nelson R."/>
            <person name="Baldwin S."/>
            <person name="Plunkett G. III"/>
            <person name="Burland V."/>
            <person name="Mau B."/>
            <person name="Petrosino J.F."/>
            <person name="Qin X."/>
            <person name="Muzny D.M."/>
            <person name="Ayele M."/>
            <person name="Gibbs R.A."/>
            <person name="Csorgo B."/>
            <person name="Posfai G."/>
            <person name="Weinstock G.M."/>
            <person name="Blattner F.R."/>
        </authorList>
    </citation>
    <scope>NUCLEOTIDE SEQUENCE [LARGE SCALE GENOMIC DNA]</scope>
    <source>
        <strain>K12 / DH10B</strain>
    </source>
</reference>
<protein>
    <recommendedName>
        <fullName evidence="1">Thymidylate kinase</fullName>
        <ecNumber evidence="1">2.7.4.9</ecNumber>
    </recommendedName>
    <alternativeName>
        <fullName evidence="1">dTMP kinase</fullName>
    </alternativeName>
</protein>
<accession>B1XA08</accession>
<keyword id="KW-0067">ATP-binding</keyword>
<keyword id="KW-0418">Kinase</keyword>
<keyword id="KW-0545">Nucleotide biosynthesis</keyword>
<keyword id="KW-0547">Nucleotide-binding</keyword>
<keyword id="KW-0808">Transferase</keyword>
<sequence>MRSKYIVIEGLEGAGKTTARNVVVETLEQLGIRDMVFTREPGGTQLAEKLRSLVLDIKSVGDEVITDKAEVLMFYAARVQLVETVIKPALANGTWVIGDRHDLSTQAYQGGGRGIDQHMLATLRDAVLGDFRPDLTLYLDVTPEVGLKRARARGELDRIEQESFDFFNRTRARYLELAAQDKSIHTIDATQPLEAVMDAIRTTVTHWVKELDA</sequence>
<evidence type="ECO:0000255" key="1">
    <source>
        <dbReference type="HAMAP-Rule" id="MF_00165"/>
    </source>
</evidence>
<gene>
    <name evidence="1" type="primary">tmk</name>
    <name type="ordered locus">ECDH10B_1170</name>
</gene>